<protein>
    <recommendedName>
        <fullName>RING1 and YY1-binding protein</fullName>
    </recommendedName>
    <alternativeName>
        <fullName>Apoptin-associating protein 1</fullName>
        <shortName>APAP-1</shortName>
    </alternativeName>
    <alternativeName>
        <fullName>Death effector domain-associated factor</fullName>
        <shortName>DED-associated factor</shortName>
    </alternativeName>
    <alternativeName>
        <fullName>YY1 and E4TF1-associated factor 1</fullName>
    </alternativeName>
</protein>
<comment type="function">
    <text evidence="2 6 7 9 13 14">Component of a Polycomb group (PcG) multiprotein PRC1-like complex, a complex class required to maintain the transcriptionally repressive state of many genes, including Hox genes, throughout development. PcG PRC1-like complex acts via chromatin remodeling and modification of histones; it mediates monoubiquitination of histone H2A 'Lys-119', rendering chromatin heritably changed in its expressibility (PubMed:25519132). Component of a PRC1-like complex that mediates monoubiquitination of histone H2A 'Lys-119' on the X chromosome and is required for normal silencing of one copy of the X chromosome in XX females. May stimulate ubiquitination of histone H2A 'Lys-119' by recruiting the complex to target sites (By similarity). Inhibits ubiquitination and subsequent degradation of TP53, and thereby plays a role in regulating transcription of TP53 target genes (PubMed:19098711). May also regulate the ubiquitin-mediated proteasomal degradation of other proteins like FANK1 to regulate apoptosis (PubMed:14765135, PubMed:27060496). May be implicated in the regulation of the transcription as a repressor of the transcriptional activity of E4TF1 (PubMed:11953439). May bind to DNA (By similarity). May play a role in the repression of tumor growth and metastasis in breast cancer by down-regulating SRRM3 (PubMed:27748911).</text>
</comment>
<comment type="subunit">
    <text evidence="2 5 6 7 8 9 10 11 12 13">Monomer. Component of repressive BCOR complex containing Polycomb group subcomplex at least composed of BCOR, PCGF1, RING1 and RNF2/RING2 (PubMed:16943429). Component of PCR1-like complexes (PubMed:20696397, PubMed:26687479). Interacts with PCGF1 (PubMed:26687479). Part of a PCR1-like complex that contains AUTS2, PCGF5, RNF2, CSNK2B and RYBP (PubMed:25519132). Interacts with RNF2; the interaction is direct (PubMed:20696397). Interacts with CBX2, YAF2, RING1 and RNF2 (By similarity). Interacts with ubiquitin and ubiquitinated proteins (By similarity). Interacts with ubiquitinated histone H2A (By similarity). Interacts with apoptin, DEDD, FADD, CASP8, CASP10, YY1 and GABPB1 (PubMed:11395500, PubMed:11953439, PubMed:14765135). Together with GABPB1 and YY1, it forms a ternary complex, probably being the bridge factor between these two transcription factors (PubMed:11953439). Interacts with MDM2, and thereby inhibits ubiquitination of TP53 (PubMed:19098711). Identified in a ternary complex containing MDM2, TP53 and RYBP (PubMed:19098711). Interacts with FANK1; may prevent the ubiquitin-mediated proteasomal degradation of FANK1 (PubMed:27060496). Interacts with IFT57 (By similarity).</text>
</comment>
<comment type="interaction">
    <interactant intactId="EBI-752324">
        <id>Q8N488</id>
    </interactant>
    <interactant intactId="EBI-930964">
        <id>P54253</id>
        <label>ATXN1</label>
    </interactant>
    <organismsDiffer>false</organismsDiffer>
    <experiments>6</experiments>
</comment>
<comment type="interaction">
    <interactant intactId="EBI-752324">
        <id>Q8N488</id>
    </interactant>
    <interactant intactId="EBI-11524452">
        <id>Q8N9N5-2</id>
        <label>BANP</label>
    </interactant>
    <organismsDiffer>false</organismsDiffer>
    <experiments>3</experiments>
</comment>
<comment type="interaction">
    <interactant intactId="EBI-752324">
        <id>Q8N488</id>
    </interactant>
    <interactant intactId="EBI-2837444">
        <id>Q8WUW1</id>
        <label>BRK1</label>
    </interactant>
    <organismsDiffer>false</organismsDiffer>
    <experiments>3</experiments>
</comment>
<comment type="interaction">
    <interactant intactId="EBI-752324">
        <id>Q8N488</id>
    </interactant>
    <interactant intactId="EBI-10200977">
        <id>P21964-2</id>
        <label>COMT</label>
    </interactant>
    <organismsDiffer>false</organismsDiffer>
    <experiments>3</experiments>
</comment>
<comment type="interaction">
    <interactant intactId="EBI-752324">
        <id>Q8N488</id>
    </interactant>
    <interactant intactId="EBI-6875961">
        <id>P02489</id>
        <label>CRYAA</label>
    </interactant>
    <organismsDiffer>false</organismsDiffer>
    <experiments>3</experiments>
</comment>
<comment type="interaction">
    <interactant intactId="EBI-752324">
        <id>Q8N488</id>
    </interactant>
    <interactant intactId="EBI-25840379">
        <id>Q14203-5</id>
        <label>DCTN1</label>
    </interactant>
    <organismsDiffer>false</organismsDiffer>
    <experiments>3</experiments>
</comment>
<comment type="interaction">
    <interactant intactId="EBI-752324">
        <id>Q8N488</id>
    </interactant>
    <interactant intactId="EBI-10976677">
        <id>G5E9A7</id>
        <label>DMWD</label>
    </interactant>
    <organismsDiffer>false</organismsDiffer>
    <experiments>3</experiments>
</comment>
<comment type="interaction">
    <interactant intactId="EBI-752324">
        <id>Q8N488</id>
    </interactant>
    <interactant intactId="EBI-750300">
        <id>Q01658</id>
        <label>DR1</label>
    </interactant>
    <organismsDiffer>false</organismsDiffer>
    <experiments>3</experiments>
</comment>
<comment type="interaction">
    <interactant intactId="EBI-752324">
        <id>Q8N488</id>
    </interactant>
    <interactant intactId="EBI-769261">
        <id>Q96JC9</id>
        <label>EAF1</label>
    </interactant>
    <organismsDiffer>false</organismsDiffer>
    <experiments>3</experiments>
</comment>
<comment type="interaction">
    <interactant intactId="EBI-752324">
        <id>Q8N488</id>
    </interactant>
    <interactant intactId="EBI-21603100">
        <id>P26378-2</id>
        <label>ELAVL4</label>
    </interactant>
    <organismsDiffer>false</organismsDiffer>
    <experiments>3</experiments>
</comment>
<comment type="interaction">
    <interactant intactId="EBI-752324">
        <id>Q8N488</id>
    </interactant>
    <interactant intactId="EBI-25852704">
        <id>P00451-2</id>
        <label>F8</label>
    </interactant>
    <organismsDiffer>false</organismsDiffer>
    <experiments>3</experiments>
</comment>
<comment type="interaction">
    <interactant intactId="EBI-752324">
        <id>Q8N488</id>
    </interactant>
    <interactant intactId="EBI-9641086">
        <id>P21333-2</id>
        <label>FLNA</label>
    </interactant>
    <organismsDiffer>false</organismsDiffer>
    <experiments>3</experiments>
</comment>
<comment type="interaction">
    <interactant intactId="EBI-752324">
        <id>Q8N488</id>
    </interactant>
    <interactant intactId="EBI-400434">
        <id>P35637</id>
        <label>FUS</label>
    </interactant>
    <organismsDiffer>false</organismsDiffer>
    <experiments>4</experiments>
</comment>
<comment type="interaction">
    <interactant intactId="EBI-752324">
        <id>Q8N488</id>
    </interactant>
    <interactant intactId="EBI-744302">
        <id>P14136</id>
        <label>GFAP</label>
    </interactant>
    <organismsDiffer>false</organismsDiffer>
    <experiments>3</experiments>
</comment>
<comment type="interaction">
    <interactant intactId="EBI-752324">
        <id>Q8N488</id>
    </interactant>
    <interactant intactId="EBI-25913156">
        <id>O14908-2</id>
        <label>GIPC1</label>
    </interactant>
    <organismsDiffer>false</organismsDiffer>
    <experiments>3</experiments>
</comment>
<comment type="interaction">
    <interactant intactId="EBI-752324">
        <id>Q8N488</id>
    </interactant>
    <interactant intactId="EBI-2558325">
        <id>P78333</id>
        <label>GPC5</label>
    </interactant>
    <organismsDiffer>false</organismsDiffer>
    <experiments>3</experiments>
</comment>
<comment type="interaction">
    <interactant intactId="EBI-752324">
        <id>Q8N488</id>
    </interactant>
    <interactant intactId="EBI-747754">
        <id>P28799</id>
        <label>GRN</label>
    </interactant>
    <organismsDiffer>false</organismsDiffer>
    <experiments>3</experiments>
</comment>
<comment type="interaction">
    <interactant intactId="EBI-752324">
        <id>Q8N488</id>
    </interactant>
    <interactant intactId="EBI-389564">
        <id>Q00403</id>
        <label>GTF2B</label>
    </interactant>
    <organismsDiffer>false</organismsDiffer>
    <experiments>3</experiments>
</comment>
<comment type="interaction">
    <interactant intactId="EBI-752324">
        <id>Q8N488</id>
    </interactant>
    <interactant intactId="EBI-1054873">
        <id>Q9Y5Q9</id>
        <label>GTF3C3</label>
    </interactant>
    <organismsDiffer>false</organismsDiffer>
    <experiments>3</experiments>
</comment>
<comment type="interaction">
    <interactant intactId="EBI-752324">
        <id>Q8N488</id>
    </interactant>
    <interactant intactId="EBI-517086">
        <id>O43464</id>
        <label>HTRA2</label>
    </interactant>
    <organismsDiffer>false</organismsDiffer>
    <experiments>3</experiments>
</comment>
<comment type="interaction">
    <interactant intactId="EBI-752324">
        <id>Q8N488</id>
    </interactant>
    <interactant intactId="EBI-466029">
        <id>P42858</id>
        <label>HTT</label>
    </interactant>
    <organismsDiffer>false</organismsDiffer>
    <experiments>9</experiments>
</comment>
<comment type="interaction">
    <interactant intactId="EBI-752324">
        <id>Q8N488</id>
    </interactant>
    <interactant intactId="EBI-10975473">
        <id>O60333-2</id>
        <label>KIF1B</label>
    </interactant>
    <organismsDiffer>false</organismsDiffer>
    <experiments>3</experiments>
</comment>
<comment type="interaction">
    <interactant intactId="EBI-752324">
        <id>Q8N488</id>
    </interactant>
    <interactant intactId="EBI-351935">
        <id>P02545</id>
        <label>LMNA</label>
    </interactant>
    <organismsDiffer>false</organismsDiffer>
    <experiments>3</experiments>
</comment>
<comment type="interaction">
    <interactant intactId="EBI-752324">
        <id>Q8N488</id>
    </interactant>
    <interactant intactId="EBI-1050743">
        <id>P31153</id>
        <label>MAT2A</label>
    </interactant>
    <organismsDiffer>false</organismsDiffer>
    <experiments>3</experiments>
</comment>
<comment type="interaction">
    <interactant intactId="EBI-752324">
        <id>Q8N488</id>
    </interactant>
    <interactant intactId="EBI-389668">
        <id>Q00987</id>
        <label>MDM2</label>
    </interactant>
    <organismsDiffer>false</organismsDiffer>
    <experiments>11</experiments>
</comment>
<comment type="interaction">
    <interactant intactId="EBI-752324">
        <id>Q8N488</id>
    </interactant>
    <interactant intactId="EBI-716486">
        <id>Q92597</id>
        <label>NDRG1</label>
    </interactant>
    <organismsDiffer>false</organismsDiffer>
    <experiments>3</experiments>
</comment>
<comment type="interaction">
    <interactant intactId="EBI-752324">
        <id>Q8N488</id>
    </interactant>
    <interactant intactId="EBI-475646">
        <id>P07196</id>
        <label>NEFL</label>
    </interactant>
    <organismsDiffer>false</organismsDiffer>
    <experiments>3</experiments>
</comment>
<comment type="interaction">
    <interactant intactId="EBI-752324">
        <id>Q8N488</id>
    </interactant>
    <interactant intactId="EBI-1014514">
        <id>P35240-4</id>
        <label>NF2</label>
    </interactant>
    <organismsDiffer>false</organismsDiffer>
    <experiments>3</experiments>
</comment>
<comment type="interaction">
    <interactant intactId="EBI-752324">
        <id>Q8N488</id>
    </interactant>
    <interactant intactId="EBI-988601">
        <id>O43933</id>
        <label>PEX1</label>
    </interactant>
    <organismsDiffer>false</organismsDiffer>
    <experiments>3</experiments>
</comment>
<comment type="interaction">
    <interactant intactId="EBI-752324">
        <id>Q8N488</id>
    </interactant>
    <interactant intactId="EBI-353408">
        <id>P14618</id>
        <label>PKM</label>
    </interactant>
    <organismsDiffer>false</organismsDiffer>
    <experiments>3</experiments>
</comment>
<comment type="interaction">
    <interactant intactId="EBI-752324">
        <id>Q8N488</id>
    </interactant>
    <interactant intactId="EBI-21251460">
        <id>O60260-5</id>
        <label>PRKN</label>
    </interactant>
    <organismsDiffer>false</organismsDiffer>
    <experiments>6</experiments>
</comment>
<comment type="interaction">
    <interactant intactId="EBI-752324">
        <id>Q8N488</id>
    </interactant>
    <interactant intactId="EBI-11047108">
        <id>P49768-2</id>
        <label>PSEN1</label>
    </interactant>
    <organismsDiffer>false</organismsDiffer>
    <experiments>6</experiments>
</comment>
<comment type="interaction">
    <interactant intactId="EBI-752324">
        <id>Q8N488</id>
    </interactant>
    <interactant intactId="EBI-2010251">
        <id>P49810</id>
        <label>PSEN2</label>
    </interactant>
    <organismsDiffer>false</organismsDiffer>
    <experiments>3</experiments>
</comment>
<comment type="interaction">
    <interactant intactId="EBI-752324">
        <id>Q8N488</id>
    </interactant>
    <interactant intactId="EBI-372273">
        <id>P20618</id>
        <label>PSMB1</label>
    </interactant>
    <organismsDiffer>false</organismsDiffer>
    <experiments>3</experiments>
</comment>
<comment type="interaction">
    <interactant intactId="EBI-752324">
        <id>Q8N488</id>
    </interactant>
    <interactant intactId="EBI-752313">
        <id>Q06587</id>
        <label>RING1</label>
    </interactant>
    <organismsDiffer>false</organismsDiffer>
    <experiments>23</experiments>
</comment>
<comment type="interaction">
    <interactant intactId="EBI-752324">
        <id>Q8N488</id>
    </interactant>
    <interactant intactId="EBI-7065222">
        <id>Q06587-2</id>
        <label>RING1</label>
    </interactant>
    <organismsDiffer>false</organismsDiffer>
    <experiments>3</experiments>
</comment>
<comment type="interaction">
    <interactant intactId="EBI-752324">
        <id>Q8N488</id>
    </interactant>
    <interactant intactId="EBI-396669">
        <id>Q9Y3C5</id>
        <label>RNF11</label>
    </interactant>
    <organismsDiffer>false</organismsDiffer>
    <experiments>3</experiments>
</comment>
<comment type="interaction">
    <interactant intactId="EBI-752324">
        <id>Q8N488</id>
    </interactant>
    <interactant intactId="EBI-722416">
        <id>Q99496</id>
        <label>RNF2</label>
    </interactant>
    <organismsDiffer>false</organismsDiffer>
    <experiments>22</experiments>
</comment>
<comment type="interaction">
    <interactant intactId="EBI-752324">
        <id>Q8N488</id>
    </interactant>
    <interactant intactId="EBI-373345">
        <id>Q99719</id>
        <label>SEPTIN5</label>
    </interactant>
    <organismsDiffer>false</organismsDiffer>
    <experiments>3</experiments>
</comment>
<comment type="interaction">
    <interactant intactId="EBI-752324">
        <id>Q8N488</id>
    </interactant>
    <interactant intactId="EBI-985879">
        <id>P37840</id>
        <label>SNCA</label>
    </interactant>
    <organismsDiffer>false</organismsDiffer>
    <experiments>3</experiments>
</comment>
<comment type="interaction">
    <interactant intactId="EBI-752324">
        <id>Q8N488</id>
    </interactant>
    <interactant intactId="EBI-727106">
        <id>Q16143</id>
        <label>SNCB</label>
    </interactant>
    <organismsDiffer>false</organismsDiffer>
    <experiments>3</experiments>
</comment>
<comment type="interaction">
    <interactant intactId="EBI-752324">
        <id>Q8N488</id>
    </interactant>
    <interactant intactId="EBI-990792">
        <id>P00441</id>
        <label>SOD1</label>
    </interactant>
    <organismsDiffer>false</organismsDiffer>
    <experiments>3</experiments>
</comment>
<comment type="interaction">
    <interactant intactId="EBI-752324">
        <id>Q8N488</id>
    </interactant>
    <interactant intactId="EBI-5235340">
        <id>Q7Z699</id>
        <label>SPRED1</label>
    </interactant>
    <organismsDiffer>false</organismsDiffer>
    <experiments>3</experiments>
</comment>
<comment type="interaction">
    <interactant intactId="EBI-752324">
        <id>Q8N488</id>
    </interactant>
    <interactant intactId="EBI-350743">
        <id>P49458</id>
        <label>SRP9</label>
    </interactant>
    <organismsDiffer>false</organismsDiffer>
    <experiments>3</experiments>
</comment>
<comment type="interaction">
    <interactant intactId="EBI-752324">
        <id>Q8N488</id>
    </interactant>
    <interactant intactId="EBI-372899">
        <id>Q13148</id>
        <label>TARDBP</label>
    </interactant>
    <organismsDiffer>false</organismsDiffer>
    <experiments>6</experiments>
</comment>
<comment type="interaction">
    <interactant intactId="EBI-752324">
        <id>Q8N488</id>
    </interactant>
    <interactant intactId="EBI-2902553">
        <id>Q9NUW8</id>
        <label>TDP1</label>
    </interactant>
    <organismsDiffer>false</organismsDiffer>
    <experiments>3</experiments>
</comment>
<comment type="interaction">
    <interactant intactId="EBI-752324">
        <id>Q8N488</id>
    </interactant>
    <interactant intactId="EBI-25842075">
        <id>P21980-2</id>
        <label>TGM2</label>
    </interactant>
    <organismsDiffer>false</organismsDiffer>
    <experiments>3</experiments>
</comment>
<comment type="interaction">
    <interactant intactId="EBI-752324">
        <id>Q8N488</id>
    </interactant>
    <interactant intactId="EBI-366083">
        <id>P04637</id>
        <label>TP53</label>
    </interactant>
    <organismsDiffer>false</organismsDiffer>
    <experiments>4</experiments>
</comment>
<comment type="interaction">
    <interactant intactId="EBI-752324">
        <id>Q8N488</id>
    </interactant>
    <interactant intactId="EBI-413034">
        <id>P0CG47</id>
        <label>UBB</label>
    </interactant>
    <organismsDiffer>false</organismsDiffer>
    <experiments>3</experiments>
</comment>
<comment type="interaction">
    <interactant intactId="EBI-752324">
        <id>Q8N488</id>
    </interactant>
    <interactant intactId="EBI-3390054">
        <id>P0CG48</id>
        <label>UBC</label>
    </interactant>
    <organismsDiffer>false</organismsDiffer>
    <experiments>3</experiments>
</comment>
<comment type="interaction">
    <interactant intactId="EBI-752324">
        <id>Q8N488</id>
    </interactant>
    <interactant intactId="EBI-2340004">
        <id>Q9HD64</id>
        <label>XAGE1B</label>
    </interactant>
    <organismsDiffer>false</organismsDiffer>
    <experiments>3</experiments>
</comment>
<comment type="interaction">
    <interactant intactId="EBI-752324">
        <id>Q8N488</id>
    </interactant>
    <interactant intactId="EBI-25878161">
        <id>Q9P1N4</id>
    </interactant>
    <organismsDiffer>false</organismsDiffer>
    <experiments>3</experiments>
</comment>
<comment type="interaction">
    <interactant intactId="EBI-752324">
        <id>Q8N488</id>
    </interactant>
    <interactant intactId="EBI-25487926">
        <id>PRO_0000037319</id>
        <label>rep</label>
        <dbReference type="UniProtKB" id="P0C6X7"/>
    </interactant>
    <organismsDiffer>true</organismsDiffer>
    <experiments>2</experiments>
</comment>
<comment type="interaction">
    <interactant intactId="EBI-752324">
        <id>Q8N488</id>
    </interactant>
    <interactant intactId="EBI-8010314">
        <id>Q923J1</id>
        <label>Trpm7</label>
    </interactant>
    <organismsDiffer>true</organismsDiffer>
    <experiments>3</experiments>
</comment>
<comment type="subcellular location">
    <subcellularLocation>
        <location evidence="5 6 7 13">Nucleus</location>
    </subcellularLocation>
    <subcellularLocation>
        <location evidence="5 7">Cytoplasm</location>
    </subcellularLocation>
    <subcellularLocation>
        <location evidence="2">Nucleus</location>
        <location evidence="2">Nucleoplasm</location>
    </subcellularLocation>
    <text evidence="2">Primarily found in the nucleus. Detected in a punctate pattern likely to represent Polycomb group (PcG) bodies (By similarity).</text>
</comment>
<comment type="tissue specificity">
    <text evidence="5 6 7 14">Down-regulated in breast cancer tissues and in several breast cancer cell lines (at protein level) (PubMed:27748911). Widely expressed with highest levels in lymphoid tissues and placenta.</text>
</comment>
<comment type="domain">
    <text evidence="1">Intrinsically unstructured in the absence of binding partners. Folds upon binding to DNA or RNF2 (By similarity).</text>
</comment>
<comment type="PTM">
    <text evidence="1">Monoubiquitinated.</text>
</comment>
<comment type="sequence caution" evidence="15">
    <conflict type="erroneous initiation">
        <sequence resource="EMBL-CDS" id="AAK63197"/>
    </conflict>
    <text>Truncated N-terminus.</text>
</comment>
<comment type="sequence caution" evidence="15">
    <conflict type="erroneous initiation">
        <sequence resource="EMBL-CDS" id="AAO73587"/>
    </conflict>
    <text>Truncated N-terminus.</text>
</comment>
<comment type="sequence caution" evidence="15">
    <conflict type="erroneous initiation">
        <sequence resource="EMBL-CDS" id="BAA89486"/>
    </conflict>
    <text>Truncated N-terminus.</text>
</comment>
<evidence type="ECO:0000250" key="1"/>
<evidence type="ECO:0000250" key="2">
    <source>
        <dbReference type="UniProtKB" id="Q8CCI5"/>
    </source>
</evidence>
<evidence type="ECO:0000255" key="3">
    <source>
        <dbReference type="PROSITE-ProRule" id="PRU00322"/>
    </source>
</evidence>
<evidence type="ECO:0000256" key="4">
    <source>
        <dbReference type="SAM" id="MobiDB-lite"/>
    </source>
</evidence>
<evidence type="ECO:0000269" key="5">
    <source>
    </source>
</evidence>
<evidence type="ECO:0000269" key="6">
    <source>
    </source>
</evidence>
<evidence type="ECO:0000269" key="7">
    <source>
    </source>
</evidence>
<evidence type="ECO:0000269" key="8">
    <source>
    </source>
</evidence>
<evidence type="ECO:0000269" key="9">
    <source>
    </source>
</evidence>
<evidence type="ECO:0000269" key="10">
    <source>
    </source>
</evidence>
<evidence type="ECO:0000269" key="11">
    <source>
    </source>
</evidence>
<evidence type="ECO:0000269" key="12">
    <source>
    </source>
</evidence>
<evidence type="ECO:0000269" key="13">
    <source>
    </source>
</evidence>
<evidence type="ECO:0000269" key="14">
    <source>
    </source>
</evidence>
<evidence type="ECO:0000305" key="15"/>
<evidence type="ECO:0007744" key="16">
    <source>
    </source>
</evidence>
<evidence type="ECO:0007744" key="17">
    <source>
    </source>
</evidence>
<evidence type="ECO:0007744" key="18">
    <source>
    </source>
</evidence>
<evidence type="ECO:0007744" key="19">
    <source>
    </source>
</evidence>
<evidence type="ECO:0007744" key="20">
    <source>
    </source>
</evidence>
<evidence type="ECO:0007744" key="21">
    <source>
    </source>
</evidence>
<evidence type="ECO:0007829" key="22">
    <source>
        <dbReference type="PDB" id="3IXS"/>
    </source>
</evidence>
<evidence type="ECO:0007829" key="23">
    <source>
        <dbReference type="PDB" id="9DBY"/>
    </source>
</evidence>
<accession>Q8N488</accession>
<accession>Q9P2W5</accession>
<accession>Q9UMW4</accession>
<dbReference type="EMBL" id="AF179286">
    <property type="protein sequence ID" value="AAD51858.1"/>
    <property type="molecule type" value="mRNA"/>
</dbReference>
<dbReference type="EMBL" id="AB029551">
    <property type="protein sequence ID" value="BAA89486.1"/>
    <property type="status" value="ALT_INIT"/>
    <property type="molecule type" value="mRNA"/>
</dbReference>
<dbReference type="EMBL" id="AY228125">
    <property type="protein sequence ID" value="AAO73587.1"/>
    <property type="status" value="ALT_INIT"/>
    <property type="molecule type" value="mRNA"/>
</dbReference>
<dbReference type="EMBL" id="AF227959">
    <property type="protein sequence ID" value="AAK63197.1"/>
    <property type="status" value="ALT_INIT"/>
    <property type="molecule type" value="mRNA"/>
</dbReference>
<dbReference type="EMBL" id="BC014959">
    <property type="protein sequence ID" value="AAH14959.1"/>
    <property type="molecule type" value="mRNA"/>
</dbReference>
<dbReference type="EMBL" id="BC036459">
    <property type="protein sequence ID" value="AAH36459.1"/>
    <property type="molecule type" value="mRNA"/>
</dbReference>
<dbReference type="RefSeq" id="NP_036366.3">
    <property type="nucleotide sequence ID" value="NM_012234.6"/>
</dbReference>
<dbReference type="PDB" id="3IXS">
    <property type="method" value="X-ray"/>
    <property type="resolution" value="1.70 A"/>
    <property type="chains" value="B/D/F/H/J/L=145-179"/>
</dbReference>
<dbReference type="PDB" id="8PP6">
    <property type="method" value="EM"/>
    <property type="resolution" value="3.18 A"/>
    <property type="chains" value="K=1-228"/>
</dbReference>
<dbReference type="PDB" id="9DBY">
    <property type="method" value="EM"/>
    <property type="resolution" value="2.80 A"/>
    <property type="chains" value="M=1-228"/>
</dbReference>
<dbReference type="PDB" id="9DDE">
    <property type="method" value="EM"/>
    <property type="resolution" value="3.20 A"/>
    <property type="chains" value="M=1-228"/>
</dbReference>
<dbReference type="PDB" id="9DG3">
    <property type="method" value="EM"/>
    <property type="resolution" value="3.46 A"/>
    <property type="chains" value="M=1-228"/>
</dbReference>
<dbReference type="PDBsum" id="3IXS"/>
<dbReference type="PDBsum" id="8PP6"/>
<dbReference type="PDBsum" id="9DBY"/>
<dbReference type="PDBsum" id="9DDE"/>
<dbReference type="PDBsum" id="9DG3"/>
<dbReference type="EMDB" id="EMD-17796"/>
<dbReference type="EMDB" id="EMD-46728"/>
<dbReference type="EMDB" id="EMD-46732"/>
<dbReference type="EMDB" id="EMD-46733"/>
<dbReference type="EMDB" id="EMD-46771"/>
<dbReference type="EMDB" id="EMD-46822"/>
<dbReference type="SMR" id="Q8N488"/>
<dbReference type="BioGRID" id="116997">
    <property type="interactions" value="242"/>
</dbReference>
<dbReference type="ComplexPortal" id="CPX-2273">
    <property type="entry name" value="Non-canonical polycomb repressive complex 1.4, RING1-RYBP variant"/>
</dbReference>
<dbReference type="ComplexPortal" id="CPX-2276">
    <property type="entry name" value="Non-canonical polycomb repressive complex 1.2, RNF2-RYBP variant"/>
</dbReference>
<dbReference type="ComplexPortal" id="CPX-2283">
    <property type="entry name" value="Non-canonical polycomb repressive complex 1.3, RING1-RYBP-CKIIA2 variant"/>
</dbReference>
<dbReference type="ComplexPortal" id="CPX-2285">
    <property type="entry name" value="Non-canonical polycomb repressive complex 1.3, RING1-RYBP-CKIIA1-A2 variant"/>
</dbReference>
<dbReference type="ComplexPortal" id="CPX-2286">
    <property type="entry name" value="Non-canonical polycomb repressive complex 1.3, RING1-RYBP-CKIIA1 variant"/>
</dbReference>
<dbReference type="ComplexPortal" id="CPX-2291">
    <property type="entry name" value="Non-canonical polycomb repressive complex 1.3, RING2-RYBP-CKIIA2 variant"/>
</dbReference>
<dbReference type="ComplexPortal" id="CPX-2292">
    <property type="entry name" value="Non-canonical polycomb repressive complex 1.3, RING2-RYBP-CKIIA1-A2 variant"/>
</dbReference>
<dbReference type="ComplexPortal" id="CPX-2295">
    <property type="entry name" value="Non-canonical polycomb repressive complex 1.3, RING2-RYBP-CKIIA1 variant"/>
</dbReference>
<dbReference type="ComplexPortal" id="CPX-2305">
    <property type="entry name" value="Non-canonical polycomb repressive complex 1.6, RING1-RYBP variant"/>
</dbReference>
<dbReference type="ComplexPortal" id="CPX-2354">
    <property type="entry name" value="Non-canonical polycomb repressive complex 1.1, RING1-PCGF1-RYBP variant"/>
</dbReference>
<dbReference type="ComplexPortal" id="CPX-2555">
    <property type="entry name" value="Non-canonical polycomb repressive complex 1.6, RING2-RYBP variant"/>
</dbReference>
<dbReference type="ComplexPortal" id="CPX-2571">
    <property type="entry name" value="Non-canonical polycomb repressive complex 1.4, RNF2-RYBP variant"/>
</dbReference>
<dbReference type="ComplexPortal" id="CPX-2627">
    <property type="entry name" value="Non-canonical polycomb repressive complex 1.1, RING2-PCGF1-RYBP variant"/>
</dbReference>
<dbReference type="ComplexPortal" id="CPX-2630">
    <property type="entry name" value="Non-canonical polycomb repressive complex 1.2, RING1-RYBP variant"/>
</dbReference>
<dbReference type="ComplexPortal" id="CPX-7581">
    <property type="entry name" value="Non-canonical polycomb repressive complex 1.5, RING1-RYBP-CKIIA2 variant"/>
</dbReference>
<dbReference type="ComplexPortal" id="CPX-7582">
    <property type="entry name" value="Non-canonical polycomb repressive complex 1.5, RING1-RYBP-CKIIA1-A2 variant"/>
</dbReference>
<dbReference type="ComplexPortal" id="CPX-7583">
    <property type="entry name" value="Non-canonical polycomb repressive complex 1.5, RING1-RYBP-CKIIA1 variant"/>
</dbReference>
<dbReference type="ComplexPortal" id="CPX-7587">
    <property type="entry name" value="Non-canonical polycomb repressive complex 1.5, RING2-RYBP-CKIIA2 variant"/>
</dbReference>
<dbReference type="ComplexPortal" id="CPX-7588">
    <property type="entry name" value="Non-canonical polycomb repressive complex 1.5, RING2-RYBP-CKIIA1-A2 variant"/>
</dbReference>
<dbReference type="ComplexPortal" id="CPX-7589">
    <property type="entry name" value="Non-canonical polycomb repressive complex 1.5, RING2-RYBP-CKIIA1 variant"/>
</dbReference>
<dbReference type="CORUM" id="Q8N488"/>
<dbReference type="DIP" id="DIP-41435N"/>
<dbReference type="FunCoup" id="Q8N488">
    <property type="interactions" value="4081"/>
</dbReference>
<dbReference type="IntAct" id="Q8N488">
    <property type="interactions" value="634"/>
</dbReference>
<dbReference type="MINT" id="Q8N488"/>
<dbReference type="STRING" id="9606.ENSP00000419494"/>
<dbReference type="GlyGen" id="Q8N488">
    <property type="glycosylation" value="1 site"/>
</dbReference>
<dbReference type="iPTMnet" id="Q8N488"/>
<dbReference type="PhosphoSitePlus" id="Q8N488"/>
<dbReference type="BioMuta" id="RYBP"/>
<dbReference type="DMDM" id="78102506"/>
<dbReference type="jPOST" id="Q8N488"/>
<dbReference type="MassIVE" id="Q8N488"/>
<dbReference type="PaxDb" id="9606-ENSP00000419494"/>
<dbReference type="PeptideAtlas" id="Q8N488"/>
<dbReference type="ProteomicsDB" id="71895"/>
<dbReference type="Pumba" id="Q8N488"/>
<dbReference type="Antibodypedia" id="7772">
    <property type="antibodies" value="497 antibodies from 37 providers"/>
</dbReference>
<dbReference type="DNASU" id="23429"/>
<dbReference type="Ensembl" id="ENST00000477973.5">
    <property type="protein sequence ID" value="ENSP00000419494.4"/>
    <property type="gene ID" value="ENSG00000163602.12"/>
</dbReference>
<dbReference type="Ensembl" id="ENST00000628983.2">
    <property type="protein sequence ID" value="ENSP00000486012.2"/>
    <property type="gene ID" value="ENSG00000281766.4"/>
</dbReference>
<dbReference type="Ensembl" id="ENST00000643872.4">
    <property type="protein sequence ID" value="ENSP00000493835.1"/>
    <property type="gene ID" value="ENSG00000281766.4"/>
</dbReference>
<dbReference type="GeneID" id="23429"/>
<dbReference type="KEGG" id="hsa:23429"/>
<dbReference type="MANE-Select" id="ENST00000643872.4">
    <property type="protein sequence ID" value="ENSP00000493835.1"/>
    <property type="RefSeq nucleotide sequence ID" value="NM_012234.7"/>
    <property type="RefSeq protein sequence ID" value="NP_036366.3"/>
</dbReference>
<dbReference type="UCSC" id="uc003dpe.4">
    <property type="organism name" value="human"/>
</dbReference>
<dbReference type="AGR" id="HGNC:10480"/>
<dbReference type="CTD" id="23429"/>
<dbReference type="DisGeNET" id="23429"/>
<dbReference type="GeneCards" id="RYBP"/>
<dbReference type="HGNC" id="HGNC:10480">
    <property type="gene designation" value="RYBP"/>
</dbReference>
<dbReference type="HPA" id="ENSG00000163602">
    <property type="expression patterns" value="Low tissue specificity"/>
</dbReference>
<dbReference type="MIM" id="607535">
    <property type="type" value="gene"/>
</dbReference>
<dbReference type="neXtProt" id="NX_Q8N488"/>
<dbReference type="PharmGKB" id="PA34893"/>
<dbReference type="VEuPathDB" id="HostDB:ENSG00000163602"/>
<dbReference type="eggNOG" id="KOG4477">
    <property type="taxonomic scope" value="Eukaryota"/>
</dbReference>
<dbReference type="HOGENOM" id="CLU_095374_0_0_1"/>
<dbReference type="InParanoid" id="Q8N488"/>
<dbReference type="OrthoDB" id="10063208at2759"/>
<dbReference type="PAN-GO" id="Q8N488">
    <property type="GO annotations" value="4 GO annotations based on evolutionary models"/>
</dbReference>
<dbReference type="PhylomeDB" id="Q8N488"/>
<dbReference type="TreeFam" id="TF350501"/>
<dbReference type="PathwayCommons" id="Q8N488"/>
<dbReference type="Reactome" id="R-HSA-8939243">
    <property type="pathway name" value="RUNX1 interacts with co-factors whose precise effect on RUNX1 targets is not known"/>
</dbReference>
<dbReference type="Reactome" id="R-HSA-8953750">
    <property type="pathway name" value="Transcriptional Regulation by E2F6"/>
</dbReference>
<dbReference type="SignaLink" id="Q8N488"/>
<dbReference type="SIGNOR" id="Q8N488"/>
<dbReference type="BioGRID-ORCS" id="23429">
    <property type="hits" value="13 hits in 221 CRISPR screens"/>
</dbReference>
<dbReference type="ChiTaRS" id="RYBP">
    <property type="organism name" value="human"/>
</dbReference>
<dbReference type="EvolutionaryTrace" id="Q8N488"/>
<dbReference type="GeneWiki" id="RYBP"/>
<dbReference type="GenomeRNAi" id="23429"/>
<dbReference type="Pharos" id="Q8N488">
    <property type="development level" value="Tbio"/>
</dbReference>
<dbReference type="PRO" id="PR:Q8N488"/>
<dbReference type="Proteomes" id="UP000005640">
    <property type="component" value="Chromosome 3"/>
</dbReference>
<dbReference type="RNAct" id="Q8N488">
    <property type="molecule type" value="protein"/>
</dbReference>
<dbReference type="Bgee" id="ENSG00000163602">
    <property type="expression patterns" value="Expressed in lower lobe of lung and 216 other cell types or tissues"/>
</dbReference>
<dbReference type="GO" id="GO:0005737">
    <property type="term" value="C:cytoplasm"/>
    <property type="evidence" value="ECO:0007669"/>
    <property type="project" value="UniProtKB-SubCell"/>
</dbReference>
<dbReference type="GO" id="GO:0005654">
    <property type="term" value="C:nucleoplasm"/>
    <property type="evidence" value="ECO:0000314"/>
    <property type="project" value="HPA"/>
</dbReference>
<dbReference type="GO" id="GO:0005634">
    <property type="term" value="C:nucleus"/>
    <property type="evidence" value="ECO:0000314"/>
    <property type="project" value="UniProtKB"/>
</dbReference>
<dbReference type="GO" id="GO:0031519">
    <property type="term" value="C:PcG protein complex"/>
    <property type="evidence" value="ECO:0000314"/>
    <property type="project" value="UniProtKB"/>
</dbReference>
<dbReference type="GO" id="GO:0003677">
    <property type="term" value="F:DNA binding"/>
    <property type="evidence" value="ECO:0000318"/>
    <property type="project" value="GO_Central"/>
</dbReference>
<dbReference type="GO" id="GO:0003676">
    <property type="term" value="F:nucleic acid binding"/>
    <property type="evidence" value="ECO:0000269"/>
    <property type="project" value="DisProt"/>
</dbReference>
<dbReference type="GO" id="GO:0003712">
    <property type="term" value="F:transcription coregulator activity"/>
    <property type="evidence" value="ECO:0000318"/>
    <property type="project" value="GO_Central"/>
</dbReference>
<dbReference type="GO" id="GO:0003714">
    <property type="term" value="F:transcription corepressor activity"/>
    <property type="evidence" value="ECO:0000304"/>
    <property type="project" value="ProtInc"/>
</dbReference>
<dbReference type="GO" id="GO:0008270">
    <property type="term" value="F:zinc ion binding"/>
    <property type="evidence" value="ECO:0007669"/>
    <property type="project" value="UniProtKB-KW"/>
</dbReference>
<dbReference type="GO" id="GO:0006915">
    <property type="term" value="P:apoptotic process"/>
    <property type="evidence" value="ECO:0007669"/>
    <property type="project" value="UniProtKB-KW"/>
</dbReference>
<dbReference type="GO" id="GO:0006338">
    <property type="term" value="P:chromatin remodeling"/>
    <property type="evidence" value="ECO:0000314"/>
    <property type="project" value="UniProtKB"/>
</dbReference>
<dbReference type="GO" id="GO:0032435">
    <property type="term" value="P:negative regulation of proteasomal ubiquitin-dependent protein catabolic process"/>
    <property type="evidence" value="ECO:0000315"/>
    <property type="project" value="UniProtKB"/>
</dbReference>
<dbReference type="GO" id="GO:0000122">
    <property type="term" value="P:negative regulation of transcription by RNA polymerase II"/>
    <property type="evidence" value="ECO:0007669"/>
    <property type="project" value="Ensembl"/>
</dbReference>
<dbReference type="GO" id="GO:0043065">
    <property type="term" value="P:positive regulation of apoptotic process"/>
    <property type="evidence" value="ECO:0000315"/>
    <property type="project" value="UniProtKB"/>
</dbReference>
<dbReference type="GO" id="GO:0045893">
    <property type="term" value="P:positive regulation of DNA-templated transcription"/>
    <property type="evidence" value="ECO:0000315"/>
    <property type="project" value="UniProtKB"/>
</dbReference>
<dbReference type="GO" id="GO:0006355">
    <property type="term" value="P:regulation of DNA-templated transcription"/>
    <property type="evidence" value="ECO:0000318"/>
    <property type="project" value="GO_Central"/>
</dbReference>
<dbReference type="DisProt" id="DP00694"/>
<dbReference type="FunFam" id="4.10.1060.10:FF:000009">
    <property type="entry name" value="YY1 associated factor 2"/>
    <property type="match status" value="1"/>
</dbReference>
<dbReference type="Gene3D" id="4.10.1060.10">
    <property type="entry name" value="Zinc finger, RanBP2-type"/>
    <property type="match status" value="1"/>
</dbReference>
<dbReference type="InterPro" id="IPR039958">
    <property type="entry name" value="RYBP/YAF2"/>
</dbReference>
<dbReference type="InterPro" id="IPR033774">
    <property type="entry name" value="YAF2_RYBP"/>
</dbReference>
<dbReference type="InterPro" id="IPR001876">
    <property type="entry name" value="Znf_RanBP2"/>
</dbReference>
<dbReference type="InterPro" id="IPR036443">
    <property type="entry name" value="Znf_RanBP2_sf"/>
</dbReference>
<dbReference type="PANTHER" id="PTHR12920:SF3">
    <property type="entry name" value="RING1 AND YY1-BINDING PROTEIN"/>
    <property type="match status" value="1"/>
</dbReference>
<dbReference type="PANTHER" id="PTHR12920">
    <property type="entry name" value="RYBP AND YAF2-RELATED"/>
    <property type="match status" value="1"/>
</dbReference>
<dbReference type="Pfam" id="PF17219">
    <property type="entry name" value="YAF2_RYBP"/>
    <property type="match status" value="1"/>
</dbReference>
<dbReference type="Pfam" id="PF00641">
    <property type="entry name" value="Zn_ribbon_RanBP"/>
    <property type="match status" value="1"/>
</dbReference>
<dbReference type="SMART" id="SM00547">
    <property type="entry name" value="ZnF_RBZ"/>
    <property type="match status" value="1"/>
</dbReference>
<dbReference type="SUPFAM" id="SSF90209">
    <property type="entry name" value="Ran binding protein zinc finger-like"/>
    <property type="match status" value="1"/>
</dbReference>
<dbReference type="PROSITE" id="PS01358">
    <property type="entry name" value="ZF_RANBP2_1"/>
    <property type="match status" value="1"/>
</dbReference>
<dbReference type="PROSITE" id="PS50199">
    <property type="entry name" value="ZF_RANBP2_2"/>
    <property type="match status" value="1"/>
</dbReference>
<reference key="1">
    <citation type="journal article" date="2001" name="J. Biol. Chem.">
        <title>The death effector domain-associated factor plays distinct regulatory roles in the nucleus and cytoplasm.</title>
        <authorList>
            <person name="Zheng L."/>
            <person name="Schickling O."/>
            <person name="Peter M.E."/>
            <person name="Lenardo M.J."/>
        </authorList>
    </citation>
    <scope>NUCLEOTIDE SEQUENCE [MRNA]</scope>
    <scope>FUNCTION</scope>
    <scope>TISSUE SPECIFICITY</scope>
    <scope>SUBCELLULAR LOCATION</scope>
    <scope>INTERACTION WITH DEDD; FADD; CASP8 AND CASP10</scope>
</reference>
<reference key="2">
    <citation type="journal article" date="2002" name="J. Biol. Chem.">
        <title>YEAF1/RYBP and YAF-2 are functionally distinct members of a cofactor family for the YY1 and E4TF1/hGABP transcription factors.</title>
        <authorList>
            <person name="Sawa C."/>
            <person name="Yoshikawa T."/>
            <person name="Matsuda-Suzuki F."/>
            <person name="Delehouzee S."/>
            <person name="Goto M."/>
            <person name="Watanabe H."/>
            <person name="Sawada J."/>
            <person name="Kataoka K."/>
            <person name="Handa H."/>
        </authorList>
    </citation>
    <scope>NUCLEOTIDE SEQUENCE [MRNA]</scope>
    <scope>FUNCTION</scope>
    <scope>TISSUE SPECIFICITY</scope>
    <scope>SUBCELLULAR LOCATION</scope>
    <scope>INTERACTION WITH YY1 AND GABPB1</scope>
    <scope>REGION</scope>
</reference>
<reference key="3">
    <citation type="journal article" date="2004" name="Cell Death Differ.">
        <title>Human death effector domain-associated factor interacts with the viral apoptosis agonist Apoptin and exerts tumor-preferential cell killing.</title>
        <authorList>
            <person name="Danen-van Oorschot A.A.M.M."/>
            <person name="Voskamp P."/>
            <person name="Seelen M.C.M.J."/>
            <person name="van Miltenburg M.H.A.M."/>
            <person name="Bolk M.W."/>
            <person name="Tait S.W."/>
            <person name="Boesen-de Cock J.G.R."/>
            <person name="Rohn J.L."/>
            <person name="Borst J."/>
            <person name="Noteborn M.H.M."/>
        </authorList>
    </citation>
    <scope>NUCLEOTIDE SEQUENCE [MRNA]</scope>
    <scope>FUNCTION</scope>
    <scope>TISSUE SPECIFICITY</scope>
    <scope>SUBCELLULAR LOCATION</scope>
    <scope>INTERACTION WITH APOPTIN</scope>
</reference>
<reference key="4">
    <citation type="submission" date="2000-01" db="EMBL/GenBank/DDBJ databases">
        <title>The chicken anemia virus protein apoptin is associated with a human apoptotic protein, APAP1.</title>
        <authorList>
            <person name="Cheng C.M."/>
            <person name="Yuo C.Y."/>
        </authorList>
    </citation>
    <scope>NUCLEOTIDE SEQUENCE [MRNA]</scope>
</reference>
<reference key="5">
    <citation type="journal article" date="2004" name="Genome Res.">
        <title>The status, quality, and expansion of the NIH full-length cDNA project: the Mammalian Gene Collection (MGC).</title>
        <authorList>
            <consortium name="The MGC Project Team"/>
        </authorList>
    </citation>
    <scope>NUCLEOTIDE SEQUENCE [LARGE SCALE MRNA]</scope>
    <source>
        <tissue>Brain</tissue>
        <tissue>Muscle</tissue>
    </source>
</reference>
<reference key="6">
    <citation type="journal article" date="2006" name="Mol. Cell. Biol.">
        <title>Polycomb group and SCF ubiquitin ligases are found in a novel BCOR complex that is recruited to BCL6 targets.</title>
        <authorList>
            <person name="Gearhart M.D."/>
            <person name="Corcoran C.M."/>
            <person name="Wamstad J.A."/>
            <person name="Bardwell V.J."/>
        </authorList>
    </citation>
    <scope>INTERACTION WITH BCOR; PCGF1; RING1 AND RNF2</scope>
</reference>
<reference key="7">
    <citation type="journal article" date="2008" name="Proc. Natl. Acad. Sci. U.S.A.">
        <title>A quantitative atlas of mitotic phosphorylation.</title>
        <authorList>
            <person name="Dephoure N."/>
            <person name="Zhou C."/>
            <person name="Villen J."/>
            <person name="Beausoleil S.A."/>
            <person name="Bakalarski C.E."/>
            <person name="Elledge S.J."/>
            <person name="Gygi S.P."/>
        </authorList>
    </citation>
    <scope>PHOSPHORYLATION [LARGE SCALE ANALYSIS] AT SER-130</scope>
    <scope>IDENTIFICATION BY MASS SPECTROMETRY [LARGE SCALE ANALYSIS]</scope>
    <source>
        <tissue>Cervix carcinoma</tissue>
    </source>
</reference>
<reference key="8">
    <citation type="journal article" date="2009" name="Anal. Chem.">
        <title>Lys-N and trypsin cover complementary parts of the phosphoproteome in a refined SCX-based approach.</title>
        <authorList>
            <person name="Gauci S."/>
            <person name="Helbig A.O."/>
            <person name="Slijper M."/>
            <person name="Krijgsveld J."/>
            <person name="Heck A.J."/>
            <person name="Mohammed S."/>
        </authorList>
    </citation>
    <scope>IDENTIFICATION BY MASS SPECTROMETRY [LARGE SCALE ANALYSIS]</scope>
</reference>
<reference key="9">
    <citation type="journal article" date="2009" name="EMBO Rep.">
        <title>RYBP stabilizes p53 by modulating MDM2.</title>
        <authorList>
            <person name="Chen D."/>
            <person name="Zhang J."/>
            <person name="Li M."/>
            <person name="Rayburn E.R."/>
            <person name="Wang H."/>
            <person name="Zhang R."/>
        </authorList>
    </citation>
    <scope>FUNCTION</scope>
    <scope>INTERACTION WITH MDM2</scope>
    <scope>IDENTIFICATION IN A COMPLEX WITH MDM2 AND TP53</scope>
</reference>
<reference key="10">
    <citation type="journal article" date="2009" name="Sci. Signal.">
        <title>Quantitative phosphoproteomic analysis of T cell receptor signaling reveals system-wide modulation of protein-protein interactions.</title>
        <authorList>
            <person name="Mayya V."/>
            <person name="Lundgren D.H."/>
            <person name="Hwang S.-I."/>
            <person name="Rezaul K."/>
            <person name="Wu L."/>
            <person name="Eng J.K."/>
            <person name="Rodionov V."/>
            <person name="Han D.K."/>
        </authorList>
    </citation>
    <scope>PHOSPHORYLATION [LARGE SCALE ANALYSIS] AT SER-127 AND SER-130</scope>
    <scope>IDENTIFICATION BY MASS SPECTROMETRY [LARGE SCALE ANALYSIS]</scope>
    <source>
        <tissue>Leukemic T-cell</tissue>
    </source>
</reference>
<reference key="11">
    <citation type="journal article" date="2010" name="Sci. Signal.">
        <title>Quantitative phosphoproteomics reveals widespread full phosphorylation site occupancy during mitosis.</title>
        <authorList>
            <person name="Olsen J.V."/>
            <person name="Vermeulen M."/>
            <person name="Santamaria A."/>
            <person name="Kumar C."/>
            <person name="Miller M.L."/>
            <person name="Jensen L.J."/>
            <person name="Gnad F."/>
            <person name="Cox J."/>
            <person name="Jensen T.S."/>
            <person name="Nigg E.A."/>
            <person name="Brunak S."/>
            <person name="Mann M."/>
        </authorList>
    </citation>
    <scope>PHOSPHORYLATION [LARGE SCALE ANALYSIS] AT SER-99</scope>
    <scope>IDENTIFICATION BY MASS SPECTROMETRY [LARGE SCALE ANALYSIS]</scope>
    <source>
        <tissue>Cervix carcinoma</tissue>
    </source>
</reference>
<reference key="12">
    <citation type="journal article" date="2011" name="BMC Syst. Biol.">
        <title>Initial characterization of the human central proteome.</title>
        <authorList>
            <person name="Burkard T.R."/>
            <person name="Planyavsky M."/>
            <person name="Kaupe I."/>
            <person name="Breitwieser F.P."/>
            <person name="Buerckstuemmer T."/>
            <person name="Bennett K.L."/>
            <person name="Superti-Furga G."/>
            <person name="Colinge J."/>
        </authorList>
    </citation>
    <scope>IDENTIFICATION BY MASS SPECTROMETRY [LARGE SCALE ANALYSIS]</scope>
</reference>
<reference key="13">
    <citation type="journal article" date="2011" name="Sci. Signal.">
        <title>System-wide temporal characterization of the proteome and phosphoproteome of human embryonic stem cell differentiation.</title>
        <authorList>
            <person name="Rigbolt K.T."/>
            <person name="Prokhorova T.A."/>
            <person name="Akimov V."/>
            <person name="Henningsen J."/>
            <person name="Johansen P.T."/>
            <person name="Kratchmarova I."/>
            <person name="Kassem M."/>
            <person name="Mann M."/>
            <person name="Olsen J.V."/>
            <person name="Blagoev B."/>
        </authorList>
    </citation>
    <scope>PHOSPHORYLATION [LARGE SCALE ANALYSIS] AT SER-99 AND SER-227</scope>
    <scope>IDENTIFICATION BY MASS SPECTROMETRY [LARGE SCALE ANALYSIS]</scope>
</reference>
<reference key="14">
    <citation type="journal article" date="2013" name="J. Proteome Res.">
        <title>Toward a comprehensive characterization of a human cancer cell phosphoproteome.</title>
        <authorList>
            <person name="Zhou H."/>
            <person name="Di Palma S."/>
            <person name="Preisinger C."/>
            <person name="Peng M."/>
            <person name="Polat A.N."/>
            <person name="Heck A.J."/>
            <person name="Mohammed S."/>
        </authorList>
    </citation>
    <scope>PHOSPHORYLATION [LARGE SCALE ANALYSIS] AT SER-99; SER-123; SER-127 AND SER-130</scope>
    <scope>IDENTIFICATION BY MASS SPECTROMETRY [LARGE SCALE ANALYSIS]</scope>
    <source>
        <tissue>Cervix carcinoma</tissue>
        <tissue>Erythroleukemia</tissue>
    </source>
</reference>
<reference key="15">
    <citation type="journal article" date="2014" name="Nature">
        <title>An AUTS2-polycomb complex activates gene expression in the CNS.</title>
        <authorList>
            <person name="Gao Z."/>
            <person name="Lee P."/>
            <person name="Stafford J.M."/>
            <person name="von Schimmelmann M."/>
            <person name="Schaefer A."/>
            <person name="Reinberg D."/>
        </authorList>
    </citation>
    <scope>IDENTIFICATION IN A COMPLEX WITH PCGF5; AUTS2; CSNK2B AND RYBP</scope>
    <scope>FUNCTION</scope>
</reference>
<reference key="16">
    <citation type="journal article" date="2015" name="Sci. Rep.">
        <title>The variant Polycomb Repressor Complex 1 component PCGF1 interacts with a pluripotency sub-network that includes DPPA4, a regulator of embryogenesis.</title>
        <authorList>
            <person name="Oliviero G."/>
            <person name="Munawar N."/>
            <person name="Watson A."/>
            <person name="Streubel G."/>
            <person name="Manning G."/>
            <person name="Bardwell V."/>
            <person name="Bracken A.P."/>
            <person name="Cagney G."/>
        </authorList>
    </citation>
    <scope>IDENTIFICATION BY MASS SPECTROMETRY</scope>
    <scope>INTERACTION WITH PCGF1</scope>
</reference>
<reference key="17">
    <citation type="journal article" date="2016" name="Cell. Signal.">
        <title>Proapoptotic RYBP interacts with FANK1 and induces tumor cell apoptosis through the AP-1 signaling pathway.</title>
        <authorList>
            <person name="Ma W."/>
            <person name="Zhang X."/>
            <person name="Li M."/>
            <person name="Ma X."/>
            <person name="Huang B."/>
            <person name="Chen H."/>
            <person name="Chen D."/>
        </authorList>
    </citation>
    <scope>FUNCTION</scope>
    <scope>INTERACTION WITH FANK1</scope>
    <scope>SUBCELLULAR LOCATION</scope>
    <scope>REGION</scope>
</reference>
<reference key="18">
    <citation type="journal article" date="2016" name="Int. J. Oncol.">
        <title>RING1 and YY1 binding protein suppresses breast cancer growth and metastasis.</title>
        <authorList>
            <person name="Zhou H."/>
            <person name="Li J."/>
            <person name="Zhang Z."/>
            <person name="Ye R."/>
            <person name="Shao N."/>
            <person name="Cheang T."/>
            <person name="Wang S."/>
        </authorList>
    </citation>
    <scope>FUNCTION</scope>
    <scope>TISSUE SPECIFICITY</scope>
</reference>
<reference key="19">
    <citation type="journal article" date="2017" name="Nat. Struct. Mol. Biol.">
        <title>Site-specific mapping of the human SUMO proteome reveals co-modification with phosphorylation.</title>
        <authorList>
            <person name="Hendriks I.A."/>
            <person name="Lyon D."/>
            <person name="Young C."/>
            <person name="Jensen L.J."/>
            <person name="Vertegaal A.C."/>
            <person name="Nielsen M.L."/>
        </authorList>
    </citation>
    <scope>SUMOYLATION [LARGE SCALE ANALYSIS] AT LYS-77</scope>
    <scope>IDENTIFICATION BY MASS SPECTROMETRY [LARGE SCALE ANALYSIS]</scope>
</reference>
<reference key="20">
    <citation type="journal article" date="2010" name="Structure">
        <title>Polycomb group targeting through different binding partners of RING1B C-terminal domain.</title>
        <authorList>
            <person name="Wang R."/>
            <person name="Taylor A.B."/>
            <person name="Leal B.Z."/>
            <person name="Chadwell L.V."/>
            <person name="Ilangovan U."/>
            <person name="Robinson A.K."/>
            <person name="Schirf V."/>
            <person name="Hart P.J."/>
            <person name="Lafer E.M."/>
            <person name="Demeler B."/>
            <person name="Hinck A.P."/>
            <person name="McEwen D.G."/>
            <person name="Kim C.A."/>
        </authorList>
    </citation>
    <scope>X-RAY CRYSTALLOGRAPHY (1.7 ANGSTROMS) OF 145-179 IN COMPLEX WITH RNF2/RING1B</scope>
    <scope>INTERACTION WITH RNF2</scope>
</reference>
<gene>
    <name type="primary">RYBP</name>
    <name type="synonym">DEDAF</name>
    <name type="synonym">YEAF1</name>
</gene>
<proteinExistence type="evidence at protein level"/>
<name>RYBP_HUMAN</name>
<sequence length="228" mass="24822">MTMGDKKSPTRPKRQAKPAADEGFWDCSVCTFRNSAEAFKCSICDVRKGTSTRKPRINSQLVAQQVAQQYATPPPPKKEKKEKVEKQDKEKPEKDKEISPSVTKKNTNKKTKPKSDILKDPPSEANSIQSANATTKTSETNHTSRPRLKNVDRSTAQQLAVTVGNVTVIITDFKEKTRSSSTSSSTVTSSAGSEQQNQSSSGSESTDKGSSRSSTPKGDMSAVNDESF</sequence>
<organism>
    <name type="scientific">Homo sapiens</name>
    <name type="common">Human</name>
    <dbReference type="NCBI Taxonomy" id="9606"/>
    <lineage>
        <taxon>Eukaryota</taxon>
        <taxon>Metazoa</taxon>
        <taxon>Chordata</taxon>
        <taxon>Craniata</taxon>
        <taxon>Vertebrata</taxon>
        <taxon>Euteleostomi</taxon>
        <taxon>Mammalia</taxon>
        <taxon>Eutheria</taxon>
        <taxon>Euarchontoglires</taxon>
        <taxon>Primates</taxon>
        <taxon>Haplorrhini</taxon>
        <taxon>Catarrhini</taxon>
        <taxon>Hominidae</taxon>
        <taxon>Homo</taxon>
    </lineage>
</organism>
<keyword id="KW-0002">3D-structure</keyword>
<keyword id="KW-0053">Apoptosis</keyword>
<keyword id="KW-0963">Cytoplasm</keyword>
<keyword id="KW-0238">DNA-binding</keyword>
<keyword id="KW-1017">Isopeptide bond</keyword>
<keyword id="KW-0479">Metal-binding</keyword>
<keyword id="KW-0539">Nucleus</keyword>
<keyword id="KW-0597">Phosphoprotein</keyword>
<keyword id="KW-1267">Proteomics identification</keyword>
<keyword id="KW-1185">Reference proteome</keyword>
<keyword id="KW-0678">Repressor</keyword>
<keyword id="KW-0804">Transcription</keyword>
<keyword id="KW-0805">Transcription regulation</keyword>
<keyword id="KW-0832">Ubl conjugation</keyword>
<keyword id="KW-0862">Zinc</keyword>
<keyword id="KW-0863">Zinc-finger</keyword>
<feature type="chain" id="PRO_0000097550" description="RING1 and YY1-binding protein">
    <location>
        <begin position="1"/>
        <end position="228"/>
    </location>
</feature>
<feature type="zinc finger region" description="RanBP2-type" evidence="3">
    <location>
        <begin position="21"/>
        <end position="50"/>
    </location>
</feature>
<feature type="region of interest" description="Disordered" evidence="4">
    <location>
        <begin position="1"/>
        <end position="21"/>
    </location>
</feature>
<feature type="region of interest" description="Disordered" evidence="4">
    <location>
        <begin position="65"/>
        <end position="156"/>
    </location>
</feature>
<feature type="region of interest" description="Interaction with GABPB1 and FANK1" evidence="6 13">
    <location>
        <begin position="143"/>
        <end position="226"/>
    </location>
</feature>
<feature type="region of interest" description="Disordered" evidence="4">
    <location>
        <begin position="172"/>
        <end position="228"/>
    </location>
</feature>
<feature type="compositionally biased region" description="Basic and acidic residues" evidence="4">
    <location>
        <begin position="76"/>
        <end position="98"/>
    </location>
</feature>
<feature type="compositionally biased region" description="Basic and acidic residues" evidence="4">
    <location>
        <begin position="113"/>
        <end position="122"/>
    </location>
</feature>
<feature type="compositionally biased region" description="Polar residues" evidence="4">
    <location>
        <begin position="124"/>
        <end position="143"/>
    </location>
</feature>
<feature type="compositionally biased region" description="Low complexity" evidence="4">
    <location>
        <begin position="179"/>
        <end position="204"/>
    </location>
</feature>
<feature type="modified residue" description="Phosphoserine" evidence="18 19 20">
    <location>
        <position position="99"/>
    </location>
</feature>
<feature type="modified residue" description="Phosphoserine" evidence="20">
    <location>
        <position position="123"/>
    </location>
</feature>
<feature type="modified residue" description="Phosphoserine" evidence="17 20">
    <location>
        <position position="127"/>
    </location>
</feature>
<feature type="modified residue" description="Phosphoserine" evidence="16 17 20">
    <location>
        <position position="130"/>
    </location>
</feature>
<feature type="modified residue" description="Phosphoserine" evidence="19">
    <location>
        <position position="227"/>
    </location>
</feature>
<feature type="cross-link" description="Glycyl lysine isopeptide (Lys-Gly) (interchain with G-Cter in SUMO2)" evidence="21">
    <location>
        <position position="77"/>
    </location>
</feature>
<feature type="sequence conflict" description="In Ref. 5; AAH36459." evidence="15" ref="5">
    <original>A</original>
    <variation>T</variation>
    <location>
        <position position="20"/>
    </location>
</feature>
<feature type="strand" evidence="23">
    <location>
        <begin position="28"/>
        <end position="30"/>
    </location>
</feature>
<feature type="turn" evidence="23">
    <location>
        <begin position="42"/>
        <end position="44"/>
    </location>
</feature>
<feature type="strand" evidence="23">
    <location>
        <begin position="51"/>
        <end position="53"/>
    </location>
</feature>
<feature type="strand" evidence="22">
    <location>
        <begin position="149"/>
        <end position="163"/>
    </location>
</feature>
<feature type="strand" evidence="22">
    <location>
        <begin position="166"/>
        <end position="175"/>
    </location>
</feature>